<sequence>MSEKTFLVEIGTEELPPKALRSLAESFAANFTAELDNAGLAHGTVQWFAAPRRLALKVANLAEAQPDREIEKRGPAIAQAFDAEGKPSKAAEGWARGCGITVDQAERLTTDKGEWLLYRAHVKGESTEALLPNMVATSLAKLPIPKLMRWGASDVHFVRPVHTVTLLLGDKVIPATILGIQSDRVIRGHRFMGEPEFTIDNADQYPEILRERGKVIADYEERKAKIKADAEEAARKIGGNADLSESLLEEVASLVEWPVVLTAKFEEKFLAVPAEALVYTMKGDQKYFPVYANDGKLLPNFIFVANIESKDPQQIISGNEKVVRPRLADAEFFFNTDRKKRLEDNLPRLQTVLFQQQLGTLRDKTDRIQALAGWIAEQIGADVNHATRAGLLSKCDLMTNMVFEFTDTQGVMGMHYARHDGEAEDVAVALNEQYQPRFAGDDLPSNPVACALAIADKMDTLAGIFGIGQHPKGDKDPFALRRAALGVLRIIVEKNLNLDLQTLTEEAVRLYGDKLTNANVVDDVIDFMLGRFRAWYQDEGYTVDTIQAVLARRPTRPADFDARMKAVSHFRTLDAAAALAAANKRVSNILAKSDEVLSDRVNASTLKEPEEIKLAMQVVVLRDKLEPYFTEGRYQDALVELAELREPVDAFFDKVMVMVDDKELRINRLTMLEKLRELFLRVADISLLQ</sequence>
<protein>
    <recommendedName>
        <fullName evidence="1">Glycine--tRNA ligase beta subunit</fullName>
        <ecNumber evidence="1">6.1.1.14</ecNumber>
    </recommendedName>
    <alternativeName>
        <fullName evidence="1">Glycyl-tRNA synthetase beta subunit</fullName>
        <shortName evidence="1">GlyRS</shortName>
    </alternativeName>
</protein>
<dbReference type="EC" id="6.1.1.14" evidence="1"/>
<dbReference type="EMBL" id="CP001396">
    <property type="protein sequence ID" value="ACR63371.1"/>
    <property type="molecule type" value="Genomic_DNA"/>
</dbReference>
<dbReference type="RefSeq" id="WP_001291772.1">
    <property type="nucleotide sequence ID" value="NC_012759.1"/>
</dbReference>
<dbReference type="SMR" id="C4ZXE9"/>
<dbReference type="KEGG" id="ebw:BWG_3248"/>
<dbReference type="HOGENOM" id="CLU_007220_2_2_6"/>
<dbReference type="GO" id="GO:0005829">
    <property type="term" value="C:cytosol"/>
    <property type="evidence" value="ECO:0007669"/>
    <property type="project" value="TreeGrafter"/>
</dbReference>
<dbReference type="GO" id="GO:0004814">
    <property type="term" value="F:arginine-tRNA ligase activity"/>
    <property type="evidence" value="ECO:0007669"/>
    <property type="project" value="InterPro"/>
</dbReference>
<dbReference type="GO" id="GO:0005524">
    <property type="term" value="F:ATP binding"/>
    <property type="evidence" value="ECO:0007669"/>
    <property type="project" value="UniProtKB-UniRule"/>
</dbReference>
<dbReference type="GO" id="GO:0004820">
    <property type="term" value="F:glycine-tRNA ligase activity"/>
    <property type="evidence" value="ECO:0007669"/>
    <property type="project" value="UniProtKB-UniRule"/>
</dbReference>
<dbReference type="GO" id="GO:0006420">
    <property type="term" value="P:arginyl-tRNA aminoacylation"/>
    <property type="evidence" value="ECO:0007669"/>
    <property type="project" value="InterPro"/>
</dbReference>
<dbReference type="GO" id="GO:0006426">
    <property type="term" value="P:glycyl-tRNA aminoacylation"/>
    <property type="evidence" value="ECO:0007669"/>
    <property type="project" value="UniProtKB-UniRule"/>
</dbReference>
<dbReference type="HAMAP" id="MF_00255">
    <property type="entry name" value="Gly_tRNA_synth_beta"/>
    <property type="match status" value="1"/>
</dbReference>
<dbReference type="InterPro" id="IPR008909">
    <property type="entry name" value="DALR_anticod-bd"/>
</dbReference>
<dbReference type="InterPro" id="IPR015944">
    <property type="entry name" value="Gly-tRNA-synth_bsu"/>
</dbReference>
<dbReference type="InterPro" id="IPR006194">
    <property type="entry name" value="Gly-tRNA-synth_heterodimer"/>
</dbReference>
<dbReference type="NCBIfam" id="TIGR00211">
    <property type="entry name" value="glyS"/>
    <property type="match status" value="1"/>
</dbReference>
<dbReference type="PANTHER" id="PTHR30075:SF2">
    <property type="entry name" value="GLYCINE--TRNA LIGASE, CHLOROPLASTIC_MITOCHONDRIAL 2"/>
    <property type="match status" value="1"/>
</dbReference>
<dbReference type="PANTHER" id="PTHR30075">
    <property type="entry name" value="GLYCYL-TRNA SYNTHETASE"/>
    <property type="match status" value="1"/>
</dbReference>
<dbReference type="Pfam" id="PF05746">
    <property type="entry name" value="DALR_1"/>
    <property type="match status" value="1"/>
</dbReference>
<dbReference type="Pfam" id="PF02092">
    <property type="entry name" value="tRNA_synt_2f"/>
    <property type="match status" value="1"/>
</dbReference>
<dbReference type="PRINTS" id="PR01045">
    <property type="entry name" value="TRNASYNTHGB"/>
</dbReference>
<dbReference type="SUPFAM" id="SSF109604">
    <property type="entry name" value="HD-domain/PDEase-like"/>
    <property type="match status" value="1"/>
</dbReference>
<dbReference type="PROSITE" id="PS50861">
    <property type="entry name" value="AA_TRNA_LIGASE_II_GLYAB"/>
    <property type="match status" value="1"/>
</dbReference>
<organism>
    <name type="scientific">Escherichia coli (strain K12 / MC4100 / BW2952)</name>
    <dbReference type="NCBI Taxonomy" id="595496"/>
    <lineage>
        <taxon>Bacteria</taxon>
        <taxon>Pseudomonadati</taxon>
        <taxon>Pseudomonadota</taxon>
        <taxon>Gammaproteobacteria</taxon>
        <taxon>Enterobacterales</taxon>
        <taxon>Enterobacteriaceae</taxon>
        <taxon>Escherichia</taxon>
    </lineage>
</organism>
<proteinExistence type="inferred from homology"/>
<gene>
    <name evidence="1" type="primary">glyS</name>
    <name type="ordered locus">BWG_3248</name>
</gene>
<reference key="1">
    <citation type="journal article" date="2009" name="J. Bacteriol.">
        <title>Genomic sequencing reveals regulatory mutations and recombinational events in the widely used MC4100 lineage of Escherichia coli K-12.</title>
        <authorList>
            <person name="Ferenci T."/>
            <person name="Zhou Z."/>
            <person name="Betteridge T."/>
            <person name="Ren Y."/>
            <person name="Liu Y."/>
            <person name="Feng L."/>
            <person name="Reeves P.R."/>
            <person name="Wang L."/>
        </authorList>
    </citation>
    <scope>NUCLEOTIDE SEQUENCE [LARGE SCALE GENOMIC DNA]</scope>
    <source>
        <strain>K12 / MC4100 / BW2952</strain>
    </source>
</reference>
<name>SYGB_ECOBW</name>
<feature type="chain" id="PRO_1000204603" description="Glycine--tRNA ligase beta subunit">
    <location>
        <begin position="1"/>
        <end position="689"/>
    </location>
</feature>
<comment type="catalytic activity">
    <reaction evidence="1">
        <text>tRNA(Gly) + glycine + ATP = glycyl-tRNA(Gly) + AMP + diphosphate</text>
        <dbReference type="Rhea" id="RHEA:16013"/>
        <dbReference type="Rhea" id="RHEA-COMP:9664"/>
        <dbReference type="Rhea" id="RHEA-COMP:9683"/>
        <dbReference type="ChEBI" id="CHEBI:30616"/>
        <dbReference type="ChEBI" id="CHEBI:33019"/>
        <dbReference type="ChEBI" id="CHEBI:57305"/>
        <dbReference type="ChEBI" id="CHEBI:78442"/>
        <dbReference type="ChEBI" id="CHEBI:78522"/>
        <dbReference type="ChEBI" id="CHEBI:456215"/>
        <dbReference type="EC" id="6.1.1.14"/>
    </reaction>
</comment>
<comment type="subunit">
    <text evidence="1">Tetramer of two alpha and two beta subunits.</text>
</comment>
<comment type="subcellular location">
    <subcellularLocation>
        <location evidence="1">Cytoplasm</location>
    </subcellularLocation>
</comment>
<comment type="similarity">
    <text evidence="1">Belongs to the class-II aminoacyl-tRNA synthetase family.</text>
</comment>
<keyword id="KW-0030">Aminoacyl-tRNA synthetase</keyword>
<keyword id="KW-0067">ATP-binding</keyword>
<keyword id="KW-0963">Cytoplasm</keyword>
<keyword id="KW-0436">Ligase</keyword>
<keyword id="KW-0547">Nucleotide-binding</keyword>
<keyword id="KW-0648">Protein biosynthesis</keyword>
<accession>C4ZXE9</accession>
<evidence type="ECO:0000255" key="1">
    <source>
        <dbReference type="HAMAP-Rule" id="MF_00255"/>
    </source>
</evidence>